<feature type="peptide" id="PRO_0000043463" description="Carcinustatin-8">
    <location>
        <begin position="1"/>
        <end position="8"/>
    </location>
</feature>
<feature type="modified residue" description="Leucine amide" evidence="1">
    <location>
        <position position="8"/>
    </location>
</feature>
<organism>
    <name type="scientific">Carcinus maenas</name>
    <name type="common">Common shore crab</name>
    <name type="synonym">Green crab</name>
    <dbReference type="NCBI Taxonomy" id="6759"/>
    <lineage>
        <taxon>Eukaryota</taxon>
        <taxon>Metazoa</taxon>
        <taxon>Ecdysozoa</taxon>
        <taxon>Arthropoda</taxon>
        <taxon>Crustacea</taxon>
        <taxon>Multicrustacea</taxon>
        <taxon>Malacostraca</taxon>
        <taxon>Eumalacostraca</taxon>
        <taxon>Eucarida</taxon>
        <taxon>Decapoda</taxon>
        <taxon>Pleocyemata</taxon>
        <taxon>Brachyura</taxon>
        <taxon>Eubrachyura</taxon>
        <taxon>Portunoidea</taxon>
        <taxon>Carcinidae</taxon>
        <taxon>Carcinus</taxon>
    </lineage>
</organism>
<protein>
    <recommendedName>
        <fullName>Carcinustatin-8</fullName>
    </recommendedName>
</protein>
<sequence length="8" mass="795">AGPYAFGL</sequence>
<name>ALL8_CARMA</name>
<reference key="1">
    <citation type="journal article" date="1997" name="Eur. J. Biochem.">
        <title>Isolation and identification of multiple neuropeptides of the allatostatin superfamily in the shore crab Carcinus maenas.</title>
        <authorList>
            <person name="Duve H."/>
            <person name="Johnsen A.H."/>
            <person name="Maestro J.-L."/>
            <person name="Scott A.G."/>
            <person name="Jaros P.P."/>
            <person name="Thorpe A."/>
        </authorList>
    </citation>
    <scope>PROTEIN SEQUENCE</scope>
    <scope>AMIDATION AT LEU-8</scope>
    <source>
        <tissue>Cerebral ganglion</tissue>
        <tissue>Thoracic ganglion</tissue>
    </source>
</reference>
<evidence type="ECO:0000269" key="1">
    <source>
    </source>
</evidence>
<evidence type="ECO:0000305" key="2"/>
<comment type="function">
    <text>May act as a neurotransmitter or neuromodulator.</text>
</comment>
<comment type="subcellular location">
    <subcellularLocation>
        <location>Secreted</location>
    </subcellularLocation>
</comment>
<comment type="similarity">
    <text evidence="2">Belongs to the allatostatin family.</text>
</comment>
<accession>P81811</accession>
<dbReference type="GO" id="GO:0005576">
    <property type="term" value="C:extracellular region"/>
    <property type="evidence" value="ECO:0007669"/>
    <property type="project" value="UniProtKB-SubCell"/>
</dbReference>
<dbReference type="GO" id="GO:0007218">
    <property type="term" value="P:neuropeptide signaling pathway"/>
    <property type="evidence" value="ECO:0007669"/>
    <property type="project" value="UniProtKB-KW"/>
</dbReference>
<keyword id="KW-0027">Amidation</keyword>
<keyword id="KW-0903">Direct protein sequencing</keyword>
<keyword id="KW-0527">Neuropeptide</keyword>
<keyword id="KW-0964">Secreted</keyword>
<proteinExistence type="evidence at protein level"/>